<reference key="1">
    <citation type="journal article" date="1998" name="Nature">
        <title>Deciphering the biology of Mycobacterium tuberculosis from the complete genome sequence.</title>
        <authorList>
            <person name="Cole S.T."/>
            <person name="Brosch R."/>
            <person name="Parkhill J."/>
            <person name="Garnier T."/>
            <person name="Churcher C.M."/>
            <person name="Harris D.E."/>
            <person name="Gordon S.V."/>
            <person name="Eiglmeier K."/>
            <person name="Gas S."/>
            <person name="Barry C.E. III"/>
            <person name="Tekaia F."/>
            <person name="Badcock K."/>
            <person name="Basham D."/>
            <person name="Brown D."/>
            <person name="Chillingworth T."/>
            <person name="Connor R."/>
            <person name="Davies R.M."/>
            <person name="Devlin K."/>
            <person name="Feltwell T."/>
            <person name="Gentles S."/>
            <person name="Hamlin N."/>
            <person name="Holroyd S."/>
            <person name="Hornsby T."/>
            <person name="Jagels K."/>
            <person name="Krogh A."/>
            <person name="McLean J."/>
            <person name="Moule S."/>
            <person name="Murphy L.D."/>
            <person name="Oliver S."/>
            <person name="Osborne J."/>
            <person name="Quail M.A."/>
            <person name="Rajandream M.A."/>
            <person name="Rogers J."/>
            <person name="Rutter S."/>
            <person name="Seeger K."/>
            <person name="Skelton S."/>
            <person name="Squares S."/>
            <person name="Squares R."/>
            <person name="Sulston J.E."/>
            <person name="Taylor K."/>
            <person name="Whitehead S."/>
            <person name="Barrell B.G."/>
        </authorList>
    </citation>
    <scope>NUCLEOTIDE SEQUENCE [LARGE SCALE GENOMIC DNA]</scope>
    <source>
        <strain>ATCC 25618 / H37Rv</strain>
    </source>
</reference>
<name>Y2312_MYCTU</name>
<sequence>MMKEIELHLVDAAAPSGEIAIKDLAALATALQELTTRISRDPINTPGPGRTKQFMEELSQLASAPGPDIDGGIDLTDDEFQAFLQAARS</sequence>
<protein>
    <recommendedName>
        <fullName>Uncharacterized protein Rv2312</fullName>
    </recommendedName>
</protein>
<organism>
    <name type="scientific">Mycobacterium tuberculosis (strain ATCC 25618 / H37Rv)</name>
    <dbReference type="NCBI Taxonomy" id="83332"/>
    <lineage>
        <taxon>Bacteria</taxon>
        <taxon>Bacillati</taxon>
        <taxon>Actinomycetota</taxon>
        <taxon>Actinomycetes</taxon>
        <taxon>Mycobacteriales</taxon>
        <taxon>Mycobacteriaceae</taxon>
        <taxon>Mycobacterium</taxon>
        <taxon>Mycobacterium tuberculosis complex</taxon>
    </lineage>
</organism>
<accession>P9WLB9</accession>
<accession>L0T994</accession>
<accession>P64991</accession>
<accession>P71900</accession>
<feature type="chain" id="PRO_0000104022" description="Uncharacterized protein Rv2312">
    <location>
        <begin position="1"/>
        <end position="89"/>
    </location>
</feature>
<gene>
    <name type="ordered locus">Rv2312</name>
    <name type="ORF">MTCY3G12.22c</name>
</gene>
<proteinExistence type="predicted"/>
<dbReference type="EMBL" id="AL123456">
    <property type="protein sequence ID" value="CCP45099.1"/>
    <property type="molecule type" value="Genomic_DNA"/>
</dbReference>
<dbReference type="PIR" id="A70703">
    <property type="entry name" value="A70703"/>
</dbReference>
<dbReference type="RefSeq" id="NP_216828.1">
    <property type="nucleotide sequence ID" value="NC_000962.3"/>
</dbReference>
<dbReference type="RefSeq" id="WP_003411919.1">
    <property type="nucleotide sequence ID" value="NZ_NVQJ01000012.1"/>
</dbReference>
<dbReference type="SMR" id="P9WLB9"/>
<dbReference type="STRING" id="83332.Rv2312"/>
<dbReference type="PaxDb" id="83332-Rv2312"/>
<dbReference type="DNASU" id="885152"/>
<dbReference type="GeneID" id="885152"/>
<dbReference type="KEGG" id="mtu:Rv2312"/>
<dbReference type="KEGG" id="mtv:RVBD_2312"/>
<dbReference type="TubercuList" id="Rv2312"/>
<dbReference type="eggNOG" id="ENOG5031QEM">
    <property type="taxonomic scope" value="Bacteria"/>
</dbReference>
<dbReference type="InParanoid" id="P9WLB9"/>
<dbReference type="OrthoDB" id="5148887at2"/>
<dbReference type="Proteomes" id="UP000001584">
    <property type="component" value="Chromosome"/>
</dbReference>
<keyword id="KW-1185">Reference proteome</keyword>